<organism>
    <name type="scientific">Cutibacterium acnes (strain DSM 16379 / KPA171202)</name>
    <name type="common">Propionibacterium acnes</name>
    <dbReference type="NCBI Taxonomy" id="267747"/>
    <lineage>
        <taxon>Bacteria</taxon>
        <taxon>Bacillati</taxon>
        <taxon>Actinomycetota</taxon>
        <taxon>Actinomycetes</taxon>
        <taxon>Propionibacteriales</taxon>
        <taxon>Propionibacteriaceae</taxon>
        <taxon>Cutibacterium</taxon>
    </lineage>
</organism>
<reference key="1">
    <citation type="journal article" date="2004" name="Science">
        <title>The complete genome sequence of Propionibacterium acnes, a commensal of human skin.</title>
        <authorList>
            <person name="Brueggemann H."/>
            <person name="Henne A."/>
            <person name="Hoster F."/>
            <person name="Liesegang H."/>
            <person name="Wiezer A."/>
            <person name="Strittmatter A."/>
            <person name="Hujer S."/>
            <person name="Duerre P."/>
            <person name="Gottschalk G."/>
        </authorList>
    </citation>
    <scope>NUCLEOTIDE SEQUENCE [LARGE SCALE GENOMIC DNA]</scope>
    <source>
        <strain>DSM 16379 / KPA171202</strain>
    </source>
</reference>
<gene>
    <name evidence="1" type="primary">truA</name>
    <name type="ordered locus">PPA1809</name>
</gene>
<feature type="chain" id="PRO_0000057430" description="tRNA pseudouridine synthase A">
    <location>
        <begin position="1"/>
        <end position="279"/>
    </location>
</feature>
<feature type="active site" description="Nucleophile" evidence="1">
    <location>
        <position position="54"/>
    </location>
</feature>
<feature type="binding site" evidence="1">
    <location>
        <position position="112"/>
    </location>
    <ligand>
        <name>substrate</name>
    </ligand>
</feature>
<dbReference type="EC" id="5.4.99.12" evidence="1"/>
<dbReference type="EMBL" id="AE017283">
    <property type="protein sequence ID" value="AAT83535.1"/>
    <property type="molecule type" value="Genomic_DNA"/>
</dbReference>
<dbReference type="RefSeq" id="WP_002517612.1">
    <property type="nucleotide sequence ID" value="NZ_CP025935.1"/>
</dbReference>
<dbReference type="SMR" id="Q6A6S8"/>
<dbReference type="EnsemblBacteria" id="AAT83535">
    <property type="protein sequence ID" value="AAT83535"/>
    <property type="gene ID" value="PPA1809"/>
</dbReference>
<dbReference type="KEGG" id="pac:PPA1809"/>
<dbReference type="PATRIC" id="fig|267747.3.peg.1867"/>
<dbReference type="eggNOG" id="COG0101">
    <property type="taxonomic scope" value="Bacteria"/>
</dbReference>
<dbReference type="HOGENOM" id="CLU_014673_0_2_11"/>
<dbReference type="Proteomes" id="UP000000603">
    <property type="component" value="Chromosome"/>
</dbReference>
<dbReference type="GO" id="GO:0003723">
    <property type="term" value="F:RNA binding"/>
    <property type="evidence" value="ECO:0007669"/>
    <property type="project" value="InterPro"/>
</dbReference>
<dbReference type="GO" id="GO:0160147">
    <property type="term" value="F:tRNA pseudouridine(38-40) synthase activity"/>
    <property type="evidence" value="ECO:0007669"/>
    <property type="project" value="UniProtKB-EC"/>
</dbReference>
<dbReference type="GO" id="GO:0031119">
    <property type="term" value="P:tRNA pseudouridine synthesis"/>
    <property type="evidence" value="ECO:0007669"/>
    <property type="project" value="UniProtKB-UniRule"/>
</dbReference>
<dbReference type="CDD" id="cd02570">
    <property type="entry name" value="PseudoU_synth_EcTruA"/>
    <property type="match status" value="1"/>
</dbReference>
<dbReference type="FunFam" id="3.30.70.580:FF:000001">
    <property type="entry name" value="tRNA pseudouridine synthase A"/>
    <property type="match status" value="1"/>
</dbReference>
<dbReference type="Gene3D" id="3.30.70.660">
    <property type="entry name" value="Pseudouridine synthase I, catalytic domain, C-terminal subdomain"/>
    <property type="match status" value="1"/>
</dbReference>
<dbReference type="Gene3D" id="3.30.70.580">
    <property type="entry name" value="Pseudouridine synthase I, catalytic domain, N-terminal subdomain"/>
    <property type="match status" value="1"/>
</dbReference>
<dbReference type="HAMAP" id="MF_00171">
    <property type="entry name" value="TruA"/>
    <property type="match status" value="1"/>
</dbReference>
<dbReference type="InterPro" id="IPR020103">
    <property type="entry name" value="PsdUridine_synth_cat_dom_sf"/>
</dbReference>
<dbReference type="InterPro" id="IPR001406">
    <property type="entry name" value="PsdUridine_synth_TruA"/>
</dbReference>
<dbReference type="InterPro" id="IPR020097">
    <property type="entry name" value="PsdUridine_synth_TruA_a/b_dom"/>
</dbReference>
<dbReference type="InterPro" id="IPR020095">
    <property type="entry name" value="PsdUridine_synth_TruA_C"/>
</dbReference>
<dbReference type="InterPro" id="IPR020094">
    <property type="entry name" value="TruA/RsuA/RluB/E/F_N"/>
</dbReference>
<dbReference type="NCBIfam" id="TIGR00071">
    <property type="entry name" value="hisT_truA"/>
    <property type="match status" value="1"/>
</dbReference>
<dbReference type="PANTHER" id="PTHR11142">
    <property type="entry name" value="PSEUDOURIDYLATE SYNTHASE"/>
    <property type="match status" value="1"/>
</dbReference>
<dbReference type="PANTHER" id="PTHR11142:SF0">
    <property type="entry name" value="TRNA PSEUDOURIDINE SYNTHASE-LIKE 1"/>
    <property type="match status" value="1"/>
</dbReference>
<dbReference type="Pfam" id="PF01416">
    <property type="entry name" value="PseudoU_synth_1"/>
    <property type="match status" value="2"/>
</dbReference>
<dbReference type="PIRSF" id="PIRSF001430">
    <property type="entry name" value="tRNA_psdUrid_synth"/>
    <property type="match status" value="1"/>
</dbReference>
<dbReference type="SUPFAM" id="SSF55120">
    <property type="entry name" value="Pseudouridine synthase"/>
    <property type="match status" value="1"/>
</dbReference>
<protein>
    <recommendedName>
        <fullName evidence="1">tRNA pseudouridine synthase A</fullName>
        <ecNumber evidence="1">5.4.99.12</ecNumber>
    </recommendedName>
    <alternativeName>
        <fullName evidence="1">tRNA pseudouridine(38-40) synthase</fullName>
    </alternativeName>
    <alternativeName>
        <fullName evidence="1">tRNA pseudouridylate synthase I</fullName>
    </alternativeName>
    <alternativeName>
        <fullName evidence="1">tRNA-uridine isomerase I</fullName>
    </alternativeName>
</protein>
<keyword id="KW-0413">Isomerase</keyword>
<keyword id="KW-0819">tRNA processing</keyword>
<evidence type="ECO:0000255" key="1">
    <source>
        <dbReference type="HAMAP-Rule" id="MF_00171"/>
    </source>
</evidence>
<name>TRUA_CUTAK</name>
<proteinExistence type="inferred from homology"/>
<accession>Q6A6S8</accession>
<sequence>MTRWRLDIAYDGANFSGWATQPDRRTVQGELETWIPRVLRLDQPTPLTVAGRTDAGVHARGQVAHVDLPDNVDTSAMLRRLSRVLTPDVVVKSVRPVPSTFDARFSALWRRYVYRLWDESSRPDPVTRFHVAPVRGHLDLDRLNTAGTSLLGLRDFAAFCKHREGATTIRTLLDCHAKRLDDPCGTVEVTVRADAFCHSMVRSLVGALTAVASGRRSQDWLDNVAASTSRASSVLVMPACGLTLEEVGYPSDEDLAQRAAQARSRRSHNDICDTCWEDR</sequence>
<comment type="function">
    <text evidence="1">Formation of pseudouridine at positions 38, 39 and 40 in the anticodon stem and loop of transfer RNAs.</text>
</comment>
<comment type="catalytic activity">
    <reaction evidence="1">
        <text>uridine(38/39/40) in tRNA = pseudouridine(38/39/40) in tRNA</text>
        <dbReference type="Rhea" id="RHEA:22376"/>
        <dbReference type="Rhea" id="RHEA-COMP:10085"/>
        <dbReference type="Rhea" id="RHEA-COMP:10087"/>
        <dbReference type="ChEBI" id="CHEBI:65314"/>
        <dbReference type="ChEBI" id="CHEBI:65315"/>
        <dbReference type="EC" id="5.4.99.12"/>
    </reaction>
</comment>
<comment type="subunit">
    <text evidence="1">Homodimer.</text>
</comment>
<comment type="similarity">
    <text evidence="1">Belongs to the tRNA pseudouridine synthase TruA family.</text>
</comment>